<proteinExistence type="evidence at protein level"/>
<accession>Q9PMQ5</accession>
<accession>Q0P8L2</accession>
<comment type="catalytic activity">
    <reaction evidence="1">
        <text>(2R)-3-phosphoglycerate + ATP = (2R)-3-phospho-glyceroyl phosphate + ADP</text>
        <dbReference type="Rhea" id="RHEA:14801"/>
        <dbReference type="ChEBI" id="CHEBI:30616"/>
        <dbReference type="ChEBI" id="CHEBI:57604"/>
        <dbReference type="ChEBI" id="CHEBI:58272"/>
        <dbReference type="ChEBI" id="CHEBI:456216"/>
        <dbReference type="EC" id="2.7.2.3"/>
    </reaction>
</comment>
<comment type="pathway">
    <text evidence="1">Carbohydrate degradation; glycolysis; pyruvate from D-glyceraldehyde 3-phosphate: step 2/5.</text>
</comment>
<comment type="subunit">
    <text evidence="1">Monomer.</text>
</comment>
<comment type="subcellular location">
    <subcellularLocation>
        <location evidence="1">Cytoplasm</location>
    </subcellularLocation>
</comment>
<comment type="similarity">
    <text evidence="1">Belongs to the phosphoglycerate kinase family.</text>
</comment>
<dbReference type="EC" id="2.7.2.3" evidence="1"/>
<dbReference type="EMBL" id="AL111168">
    <property type="protein sequence ID" value="CAL35511.1"/>
    <property type="molecule type" value="Genomic_DNA"/>
</dbReference>
<dbReference type="PIR" id="B81285">
    <property type="entry name" value="B81285"/>
</dbReference>
<dbReference type="RefSeq" id="WP_010891932.1">
    <property type="nucleotide sequence ID" value="NZ_SZUC01000003.1"/>
</dbReference>
<dbReference type="RefSeq" id="YP_002344785.1">
    <property type="nucleotide sequence ID" value="NC_002163.1"/>
</dbReference>
<dbReference type="PDB" id="3Q3V">
    <property type="method" value="X-ray"/>
    <property type="resolution" value="2.14 A"/>
    <property type="chains" value="A/B=1-400"/>
</dbReference>
<dbReference type="PDBsum" id="3Q3V"/>
<dbReference type="SMR" id="Q9PMQ5"/>
<dbReference type="IntAct" id="Q9PMQ5">
    <property type="interactions" value="70"/>
</dbReference>
<dbReference type="STRING" id="192222.Cj1402c"/>
<dbReference type="PaxDb" id="192222-Cj1402c"/>
<dbReference type="EnsemblBacteria" id="CAL35511">
    <property type="protein sequence ID" value="CAL35511"/>
    <property type="gene ID" value="Cj1402c"/>
</dbReference>
<dbReference type="GeneID" id="905691"/>
<dbReference type="KEGG" id="cje:Cj1402c"/>
<dbReference type="PATRIC" id="fig|192222.6.peg.1383"/>
<dbReference type="eggNOG" id="COG0126">
    <property type="taxonomic scope" value="Bacteria"/>
</dbReference>
<dbReference type="HOGENOM" id="CLU_025427_0_2_7"/>
<dbReference type="OrthoDB" id="9808460at2"/>
<dbReference type="UniPathway" id="UPA00109">
    <property type="reaction ID" value="UER00185"/>
</dbReference>
<dbReference type="EvolutionaryTrace" id="Q9PMQ5"/>
<dbReference type="Proteomes" id="UP000000799">
    <property type="component" value="Chromosome"/>
</dbReference>
<dbReference type="GO" id="GO:0005829">
    <property type="term" value="C:cytosol"/>
    <property type="evidence" value="ECO:0007669"/>
    <property type="project" value="TreeGrafter"/>
</dbReference>
<dbReference type="GO" id="GO:0043531">
    <property type="term" value="F:ADP binding"/>
    <property type="evidence" value="ECO:0007669"/>
    <property type="project" value="TreeGrafter"/>
</dbReference>
<dbReference type="GO" id="GO:0005524">
    <property type="term" value="F:ATP binding"/>
    <property type="evidence" value="ECO:0007669"/>
    <property type="project" value="UniProtKB-KW"/>
</dbReference>
<dbReference type="GO" id="GO:0004618">
    <property type="term" value="F:phosphoglycerate kinase activity"/>
    <property type="evidence" value="ECO:0007669"/>
    <property type="project" value="UniProtKB-UniRule"/>
</dbReference>
<dbReference type="GO" id="GO:0006094">
    <property type="term" value="P:gluconeogenesis"/>
    <property type="evidence" value="ECO:0007669"/>
    <property type="project" value="TreeGrafter"/>
</dbReference>
<dbReference type="GO" id="GO:0006096">
    <property type="term" value="P:glycolytic process"/>
    <property type="evidence" value="ECO:0007669"/>
    <property type="project" value="UniProtKB-UniRule"/>
</dbReference>
<dbReference type="FunFam" id="3.40.50.1260:FF:000003">
    <property type="entry name" value="Phosphoglycerate kinase"/>
    <property type="match status" value="1"/>
</dbReference>
<dbReference type="FunFam" id="3.40.50.1260:FF:000006">
    <property type="entry name" value="Phosphoglycerate kinase"/>
    <property type="match status" value="1"/>
</dbReference>
<dbReference type="Gene3D" id="3.40.50.1260">
    <property type="entry name" value="Phosphoglycerate kinase, N-terminal domain"/>
    <property type="match status" value="2"/>
</dbReference>
<dbReference type="HAMAP" id="MF_00145">
    <property type="entry name" value="Phosphoglyc_kinase"/>
    <property type="match status" value="1"/>
</dbReference>
<dbReference type="InterPro" id="IPR001576">
    <property type="entry name" value="Phosphoglycerate_kinase"/>
</dbReference>
<dbReference type="InterPro" id="IPR015911">
    <property type="entry name" value="Phosphoglycerate_kinase_CS"/>
</dbReference>
<dbReference type="InterPro" id="IPR015824">
    <property type="entry name" value="Phosphoglycerate_kinase_N"/>
</dbReference>
<dbReference type="InterPro" id="IPR036043">
    <property type="entry name" value="Phosphoglycerate_kinase_sf"/>
</dbReference>
<dbReference type="PANTHER" id="PTHR11406">
    <property type="entry name" value="PHOSPHOGLYCERATE KINASE"/>
    <property type="match status" value="1"/>
</dbReference>
<dbReference type="PANTHER" id="PTHR11406:SF23">
    <property type="entry name" value="PHOSPHOGLYCERATE KINASE 1, CHLOROPLASTIC-RELATED"/>
    <property type="match status" value="1"/>
</dbReference>
<dbReference type="Pfam" id="PF00162">
    <property type="entry name" value="PGK"/>
    <property type="match status" value="1"/>
</dbReference>
<dbReference type="PIRSF" id="PIRSF000724">
    <property type="entry name" value="Pgk"/>
    <property type="match status" value="1"/>
</dbReference>
<dbReference type="PRINTS" id="PR00477">
    <property type="entry name" value="PHGLYCKINASE"/>
</dbReference>
<dbReference type="SUPFAM" id="SSF53748">
    <property type="entry name" value="Phosphoglycerate kinase"/>
    <property type="match status" value="1"/>
</dbReference>
<dbReference type="PROSITE" id="PS00111">
    <property type="entry name" value="PGLYCERATE_KINASE"/>
    <property type="match status" value="1"/>
</dbReference>
<reference key="1">
    <citation type="journal article" date="2000" name="Nature">
        <title>The genome sequence of the food-borne pathogen Campylobacter jejuni reveals hypervariable sequences.</title>
        <authorList>
            <person name="Parkhill J."/>
            <person name="Wren B.W."/>
            <person name="Mungall K.L."/>
            <person name="Ketley J.M."/>
            <person name="Churcher C.M."/>
            <person name="Basham D."/>
            <person name="Chillingworth T."/>
            <person name="Davies R.M."/>
            <person name="Feltwell T."/>
            <person name="Holroyd S."/>
            <person name="Jagels K."/>
            <person name="Karlyshev A.V."/>
            <person name="Moule S."/>
            <person name="Pallen M.J."/>
            <person name="Penn C.W."/>
            <person name="Quail M.A."/>
            <person name="Rajandream M.A."/>
            <person name="Rutherford K.M."/>
            <person name="van Vliet A.H.M."/>
            <person name="Whitehead S."/>
            <person name="Barrell B.G."/>
        </authorList>
    </citation>
    <scope>NUCLEOTIDE SEQUENCE [LARGE SCALE GENOMIC DNA]</scope>
    <source>
        <strain>ATCC 700819 / NCTC 11168</strain>
    </source>
</reference>
<name>PGK_CAMJE</name>
<evidence type="ECO:0000255" key="1">
    <source>
        <dbReference type="HAMAP-Rule" id="MF_00145"/>
    </source>
</evidence>
<evidence type="ECO:0007829" key="2">
    <source>
        <dbReference type="PDB" id="3Q3V"/>
    </source>
</evidence>
<feature type="chain" id="PRO_0000145921" description="Phosphoglycerate kinase">
    <location>
        <begin position="1"/>
        <end position="400"/>
    </location>
</feature>
<feature type="binding site" evidence="1">
    <location>
        <begin position="22"/>
        <end position="24"/>
    </location>
    <ligand>
        <name>substrate</name>
    </ligand>
</feature>
<feature type="binding site" evidence="1">
    <location>
        <position position="38"/>
    </location>
    <ligand>
        <name>substrate</name>
    </ligand>
</feature>
<feature type="binding site" evidence="1">
    <location>
        <begin position="61"/>
        <end position="64"/>
    </location>
    <ligand>
        <name>substrate</name>
    </ligand>
</feature>
<feature type="binding site" evidence="1">
    <location>
        <position position="119"/>
    </location>
    <ligand>
        <name>substrate</name>
    </ligand>
</feature>
<feature type="binding site" evidence="1">
    <location>
        <position position="152"/>
    </location>
    <ligand>
        <name>substrate</name>
    </ligand>
</feature>
<feature type="binding site" evidence="1">
    <location>
        <position position="205"/>
    </location>
    <ligand>
        <name>ATP</name>
        <dbReference type="ChEBI" id="CHEBI:30616"/>
    </ligand>
</feature>
<feature type="binding site" evidence="1">
    <location>
        <position position="296"/>
    </location>
    <ligand>
        <name>ATP</name>
        <dbReference type="ChEBI" id="CHEBI:30616"/>
    </ligand>
</feature>
<feature type="binding site" evidence="1">
    <location>
        <position position="327"/>
    </location>
    <ligand>
        <name>ATP</name>
        <dbReference type="ChEBI" id="CHEBI:30616"/>
    </ligand>
</feature>
<feature type="binding site" evidence="1">
    <location>
        <begin position="353"/>
        <end position="356"/>
    </location>
    <ligand>
        <name>ATP</name>
        <dbReference type="ChEBI" id="CHEBI:30616"/>
    </ligand>
</feature>
<feature type="helix" evidence="2">
    <location>
        <begin position="7"/>
        <end position="9"/>
    </location>
</feature>
<feature type="strand" evidence="2">
    <location>
        <begin position="16"/>
        <end position="20"/>
    </location>
</feature>
<feature type="helix" evidence="2">
    <location>
        <begin position="37"/>
        <end position="51"/>
    </location>
</feature>
<feature type="strand" evidence="2">
    <location>
        <begin position="55"/>
        <end position="59"/>
    </location>
</feature>
<feature type="helix" evidence="2">
    <location>
        <begin position="70"/>
        <end position="72"/>
    </location>
</feature>
<feature type="helix" evidence="2">
    <location>
        <begin position="75"/>
        <end position="85"/>
    </location>
</feature>
<feature type="strand" evidence="2">
    <location>
        <begin position="93"/>
        <end position="97"/>
    </location>
</feature>
<feature type="helix" evidence="2">
    <location>
        <begin position="98"/>
        <end position="106"/>
    </location>
</feature>
<feature type="strand" evidence="2">
    <location>
        <begin position="112"/>
        <end position="114"/>
    </location>
</feature>
<feature type="helix" evidence="2">
    <location>
        <begin position="118"/>
        <end position="120"/>
    </location>
</feature>
<feature type="helix" evidence="2">
    <location>
        <begin position="124"/>
        <end position="126"/>
    </location>
</feature>
<feature type="helix" evidence="2">
    <location>
        <begin position="129"/>
        <end position="137"/>
    </location>
</feature>
<feature type="strand" evidence="2">
    <location>
        <begin position="140"/>
        <end position="144"/>
    </location>
</feature>
<feature type="helix" evidence="2">
    <location>
        <begin position="147"/>
        <end position="149"/>
    </location>
</feature>
<feature type="turn" evidence="2">
    <location>
        <begin position="155"/>
        <end position="158"/>
    </location>
</feature>
<feature type="helix" evidence="2">
    <location>
        <begin position="159"/>
        <end position="163"/>
    </location>
</feature>
<feature type="strand" evidence="2">
    <location>
        <begin position="168"/>
        <end position="171"/>
    </location>
</feature>
<feature type="helix" evidence="2">
    <location>
        <begin position="173"/>
        <end position="185"/>
    </location>
</feature>
<feature type="strand" evidence="2">
    <location>
        <begin position="191"/>
        <end position="197"/>
    </location>
</feature>
<feature type="helix" evidence="2">
    <location>
        <begin position="202"/>
        <end position="212"/>
    </location>
</feature>
<feature type="turn" evidence="2">
    <location>
        <begin position="213"/>
        <end position="215"/>
    </location>
</feature>
<feature type="strand" evidence="2">
    <location>
        <begin position="217"/>
        <end position="221"/>
    </location>
</feature>
<feature type="helix" evidence="2">
    <location>
        <begin position="226"/>
        <end position="232"/>
    </location>
</feature>
<feature type="helix" evidence="2">
    <location>
        <begin position="244"/>
        <end position="246"/>
    </location>
</feature>
<feature type="helix" evidence="2">
    <location>
        <begin position="247"/>
        <end position="259"/>
    </location>
</feature>
<feature type="strand" evidence="2">
    <location>
        <begin position="263"/>
        <end position="265"/>
    </location>
</feature>
<feature type="strand" evidence="2">
    <location>
        <begin position="268"/>
        <end position="277"/>
    </location>
</feature>
<feature type="strand" evidence="2">
    <location>
        <begin position="283"/>
        <end position="286"/>
    </location>
</feature>
<feature type="helix" evidence="2">
    <location>
        <begin position="287"/>
        <end position="289"/>
    </location>
</feature>
<feature type="strand" evidence="2">
    <location>
        <begin position="295"/>
        <end position="299"/>
    </location>
</feature>
<feature type="helix" evidence="2">
    <location>
        <begin position="301"/>
        <end position="311"/>
    </location>
</feature>
<feature type="strand" evidence="2">
    <location>
        <begin position="315"/>
        <end position="321"/>
    </location>
</feature>
<feature type="helix" evidence="2">
    <location>
        <begin position="329"/>
        <end position="331"/>
    </location>
</feature>
<feature type="helix" evidence="2">
    <location>
        <begin position="333"/>
        <end position="344"/>
    </location>
</feature>
<feature type="strand" evidence="2">
    <location>
        <begin position="345"/>
        <end position="353"/>
    </location>
</feature>
<feature type="helix" evidence="2">
    <location>
        <begin position="354"/>
        <end position="362"/>
    </location>
</feature>
<feature type="helix" evidence="2">
    <location>
        <begin position="366"/>
        <end position="368"/>
    </location>
</feature>
<feature type="strand" evidence="2">
    <location>
        <begin position="369"/>
        <end position="372"/>
    </location>
</feature>
<feature type="helix" evidence="2">
    <location>
        <begin position="376"/>
        <end position="383"/>
    </location>
</feature>
<feature type="helix" evidence="2">
    <location>
        <begin position="389"/>
        <end position="392"/>
    </location>
</feature>
<gene>
    <name evidence="1" type="primary">pgk</name>
    <name type="ordered locus">Cj1402c</name>
</gene>
<sequence>MSDIISIKDIDLAKKKVFIRCDFNVPQDDFLNITDDRRIRSAIPTIRYCLDNGCSVILASHLGRPKEISSKYSLEPVAKRLARLLDKEIVMAKDVIGEDAKTKAMNLKAGEILLLENLRFEKGETKNDENLAKELASMVQVYINDAFGVCHRAHSSVEAITKFFDEKHKGAGFLLQKEIDFASNLIKHPARPFVAVVGGSKVSGKLQALTNLLPKVDKLIIGGGMAFTFLKALGYDIGNSLLEEELLEEANKILTKGKNLGVKIYLPVDVVAAPACSQDVPMKFVPAQEIPNGWMGLDIGPASVRLFKEVISDAQTIWWNGPMGVFEIDKFSKGSIKMSHYISEGHATSVVGGGDTADVVARAGDADEMTFISTGGGASLELIEGKELPGVKALRSKENE</sequence>
<keyword id="KW-0002">3D-structure</keyword>
<keyword id="KW-0067">ATP-binding</keyword>
<keyword id="KW-0963">Cytoplasm</keyword>
<keyword id="KW-0324">Glycolysis</keyword>
<keyword id="KW-0418">Kinase</keyword>
<keyword id="KW-0547">Nucleotide-binding</keyword>
<keyword id="KW-1185">Reference proteome</keyword>
<keyword id="KW-0808">Transferase</keyword>
<protein>
    <recommendedName>
        <fullName evidence="1">Phosphoglycerate kinase</fullName>
        <ecNumber evidence="1">2.7.2.3</ecNumber>
    </recommendedName>
</protein>
<organism>
    <name type="scientific">Campylobacter jejuni subsp. jejuni serotype O:2 (strain ATCC 700819 / NCTC 11168)</name>
    <dbReference type="NCBI Taxonomy" id="192222"/>
    <lineage>
        <taxon>Bacteria</taxon>
        <taxon>Pseudomonadati</taxon>
        <taxon>Campylobacterota</taxon>
        <taxon>Epsilonproteobacteria</taxon>
        <taxon>Campylobacterales</taxon>
        <taxon>Campylobacteraceae</taxon>
        <taxon>Campylobacter</taxon>
    </lineage>
</organism>